<protein>
    <recommendedName>
        <fullName evidence="1">NADPH-dependent 7-cyano-7-deazaguanine reductase</fullName>
        <ecNumber evidence="1">1.7.1.13</ecNumber>
    </recommendedName>
    <alternativeName>
        <fullName evidence="1">7-cyano-7-carbaguanine reductase</fullName>
    </alternativeName>
    <alternativeName>
        <fullName evidence="1">NADPH-dependent nitrile oxidoreductase</fullName>
    </alternativeName>
    <alternativeName>
        <fullName evidence="1">PreQ(0) reductase</fullName>
    </alternativeName>
</protein>
<accession>A6UBU5</accession>
<proteinExistence type="inferred from homology"/>
<dbReference type="EC" id="1.7.1.13" evidence="1"/>
<dbReference type="EMBL" id="CP000738">
    <property type="protein sequence ID" value="ABR61125.1"/>
    <property type="molecule type" value="Genomic_DNA"/>
</dbReference>
<dbReference type="RefSeq" id="WP_012066516.1">
    <property type="nucleotide sequence ID" value="NC_009636.1"/>
</dbReference>
<dbReference type="RefSeq" id="YP_001327960.1">
    <property type="nucleotide sequence ID" value="NC_009636.1"/>
</dbReference>
<dbReference type="SMR" id="A6UBU5"/>
<dbReference type="STRING" id="366394.Smed_2293"/>
<dbReference type="GeneID" id="61611467"/>
<dbReference type="KEGG" id="smd:Smed_2293"/>
<dbReference type="PATRIC" id="fig|366394.8.peg.5469"/>
<dbReference type="eggNOG" id="COG0780">
    <property type="taxonomic scope" value="Bacteria"/>
</dbReference>
<dbReference type="HOGENOM" id="CLU_102489_0_1_5"/>
<dbReference type="OrthoDB" id="9789995at2"/>
<dbReference type="UniPathway" id="UPA00392"/>
<dbReference type="Proteomes" id="UP000001108">
    <property type="component" value="Chromosome"/>
</dbReference>
<dbReference type="GO" id="GO:0005737">
    <property type="term" value="C:cytoplasm"/>
    <property type="evidence" value="ECO:0007669"/>
    <property type="project" value="UniProtKB-SubCell"/>
</dbReference>
<dbReference type="GO" id="GO:0033739">
    <property type="term" value="F:preQ1 synthase activity"/>
    <property type="evidence" value="ECO:0007669"/>
    <property type="project" value="UniProtKB-UniRule"/>
</dbReference>
<dbReference type="GO" id="GO:0008616">
    <property type="term" value="P:queuosine biosynthetic process"/>
    <property type="evidence" value="ECO:0007669"/>
    <property type="project" value="UniProtKB-UniRule"/>
</dbReference>
<dbReference type="GO" id="GO:0006400">
    <property type="term" value="P:tRNA modification"/>
    <property type="evidence" value="ECO:0007669"/>
    <property type="project" value="UniProtKB-UniRule"/>
</dbReference>
<dbReference type="Gene3D" id="3.30.1130.10">
    <property type="match status" value="1"/>
</dbReference>
<dbReference type="HAMAP" id="MF_00818">
    <property type="entry name" value="QueF_type1"/>
    <property type="match status" value="1"/>
</dbReference>
<dbReference type="InterPro" id="IPR043133">
    <property type="entry name" value="GTP-CH-I_C/QueF"/>
</dbReference>
<dbReference type="InterPro" id="IPR050084">
    <property type="entry name" value="NADPH_dep_7-cyano-7-deazaG_red"/>
</dbReference>
<dbReference type="InterPro" id="IPR029500">
    <property type="entry name" value="QueF"/>
</dbReference>
<dbReference type="InterPro" id="IPR016856">
    <property type="entry name" value="QueF_type1"/>
</dbReference>
<dbReference type="NCBIfam" id="TIGR03139">
    <property type="entry name" value="QueF-II"/>
    <property type="match status" value="1"/>
</dbReference>
<dbReference type="PANTHER" id="PTHR34354">
    <property type="entry name" value="NADPH-DEPENDENT 7-CYANO-7-DEAZAGUANINE REDUCTASE"/>
    <property type="match status" value="1"/>
</dbReference>
<dbReference type="PANTHER" id="PTHR34354:SF1">
    <property type="entry name" value="NADPH-DEPENDENT 7-CYANO-7-DEAZAGUANINE REDUCTASE"/>
    <property type="match status" value="1"/>
</dbReference>
<dbReference type="Pfam" id="PF14489">
    <property type="entry name" value="QueF"/>
    <property type="match status" value="1"/>
</dbReference>
<dbReference type="SUPFAM" id="SSF55620">
    <property type="entry name" value="Tetrahydrobiopterin biosynthesis enzymes-like"/>
    <property type="match status" value="1"/>
</dbReference>
<comment type="function">
    <text evidence="1">Catalyzes the NADPH-dependent reduction of 7-cyano-7-deazaguanine (preQ0) to 7-aminomethyl-7-deazaguanine (preQ1).</text>
</comment>
<comment type="catalytic activity">
    <reaction evidence="1">
        <text>7-aminomethyl-7-carbaguanine + 2 NADP(+) = 7-cyano-7-deazaguanine + 2 NADPH + 3 H(+)</text>
        <dbReference type="Rhea" id="RHEA:13409"/>
        <dbReference type="ChEBI" id="CHEBI:15378"/>
        <dbReference type="ChEBI" id="CHEBI:45075"/>
        <dbReference type="ChEBI" id="CHEBI:57783"/>
        <dbReference type="ChEBI" id="CHEBI:58349"/>
        <dbReference type="ChEBI" id="CHEBI:58703"/>
        <dbReference type="EC" id="1.7.1.13"/>
    </reaction>
</comment>
<comment type="pathway">
    <text evidence="1">tRNA modification; tRNA-queuosine biosynthesis.</text>
</comment>
<comment type="subcellular location">
    <subcellularLocation>
        <location evidence="1">Cytoplasm</location>
    </subcellularLocation>
</comment>
<comment type="similarity">
    <text evidence="1">Belongs to the GTP cyclohydrolase I family. QueF type 1 subfamily.</text>
</comment>
<organism>
    <name type="scientific">Sinorhizobium medicae (strain WSM419)</name>
    <name type="common">Ensifer medicae</name>
    <dbReference type="NCBI Taxonomy" id="366394"/>
    <lineage>
        <taxon>Bacteria</taxon>
        <taxon>Pseudomonadati</taxon>
        <taxon>Pseudomonadota</taxon>
        <taxon>Alphaproteobacteria</taxon>
        <taxon>Hyphomicrobiales</taxon>
        <taxon>Rhizobiaceae</taxon>
        <taxon>Sinorhizobium/Ensifer group</taxon>
        <taxon>Sinorhizobium</taxon>
    </lineage>
</organism>
<feature type="chain" id="PRO_1000062410" description="NADPH-dependent 7-cyano-7-deazaguanine reductase">
    <location>
        <begin position="1"/>
        <end position="154"/>
    </location>
</feature>
<feature type="active site" description="Thioimide intermediate" evidence="1">
    <location>
        <position position="52"/>
    </location>
</feature>
<feature type="active site" description="Proton donor" evidence="1">
    <location>
        <position position="59"/>
    </location>
</feature>
<feature type="binding site" evidence="1">
    <location>
        <begin position="74"/>
        <end position="76"/>
    </location>
    <ligand>
        <name>substrate</name>
    </ligand>
</feature>
<feature type="binding site" evidence="1">
    <location>
        <begin position="93"/>
        <end position="94"/>
    </location>
    <ligand>
        <name>substrate</name>
    </ligand>
</feature>
<name>QUEF_SINMW</name>
<reference key="1">
    <citation type="submission" date="2007-06" db="EMBL/GenBank/DDBJ databases">
        <title>Complete sequence of Sinorhizobium medicae WSM419 chromosome.</title>
        <authorList>
            <consortium name="US DOE Joint Genome Institute"/>
            <person name="Copeland A."/>
            <person name="Lucas S."/>
            <person name="Lapidus A."/>
            <person name="Barry K."/>
            <person name="Glavina del Rio T."/>
            <person name="Dalin E."/>
            <person name="Tice H."/>
            <person name="Pitluck S."/>
            <person name="Chain P."/>
            <person name="Malfatti S."/>
            <person name="Shin M."/>
            <person name="Vergez L."/>
            <person name="Schmutz J."/>
            <person name="Larimer F."/>
            <person name="Land M."/>
            <person name="Hauser L."/>
            <person name="Kyrpides N."/>
            <person name="Mikhailova N."/>
            <person name="Reeve W.G."/>
            <person name="Richardson P."/>
        </authorList>
    </citation>
    <scope>NUCLEOTIDE SEQUENCE [LARGE SCALE GENOMIC DNA]</scope>
    <source>
        <strain>WSM419</strain>
    </source>
</reference>
<evidence type="ECO:0000255" key="1">
    <source>
        <dbReference type="HAMAP-Rule" id="MF_00818"/>
    </source>
</evidence>
<gene>
    <name evidence="1" type="primary">queF</name>
    <name type="ordered locus">Smed_2293</name>
</gene>
<keyword id="KW-0963">Cytoplasm</keyword>
<keyword id="KW-0521">NADP</keyword>
<keyword id="KW-0560">Oxidoreductase</keyword>
<keyword id="KW-0671">Queuosine biosynthesis</keyword>
<sequence length="154" mass="17122">MTKTDVSGLSQLGTKVDLPQNPEEAVLERVPSGHGGTDFVVRFTAPEFTSLCPMTGQPDFAHLVIDYVPDGWLVESKSLKLFLHSFRNHGAFHEDCTIDIAKRLVSLLSPKWLRIGAYWYPRGGIPIDVFWQTGSPPEGVWLPDQGVPTYRGRG</sequence>